<sequence length="31" mass="3182">GTVPCGESCVFIPCITGIAGCSCKNKVCYID</sequence>
<accession>P86850</accession>
<reference evidence="5" key="1">
    <citation type="journal article" date="2011" name="ACS Chem. Biol.">
        <title>The discovery of cyclotides in the Fabaceae plant family provides new insights into the cyclization, evolution and distribution of circular proteins.</title>
        <authorList>
            <person name="Poth A.G."/>
            <person name="Colgrave M.L."/>
            <person name="Philip R."/>
            <person name="Kerenga B."/>
            <person name="Daly N.L."/>
            <person name="Anderson M."/>
            <person name="Craik D.J."/>
        </authorList>
    </citation>
    <scope>PROTEIN SEQUENCE</scope>
    <scope>DISULFIDE BONDS</scope>
    <scope>CYCLIZATION</scope>
    <scope>MASS SPECTROMETRY</scope>
    <source>
        <tissue evidence="3">Seed</tissue>
    </source>
</reference>
<keyword id="KW-0903">Direct protein sequencing</keyword>
<keyword id="KW-1015">Disulfide bond</keyword>
<keyword id="KW-0960">Knottin</keyword>
<keyword id="KW-0611">Plant defense</keyword>
<name>CYCJ_CLITE</name>
<comment type="function">
    <text evidence="1 2">Probably participates in a plant defense mechanism.</text>
</comment>
<comment type="domain">
    <text evidence="5">The presence of a 'disulfide through disulfide knot' structurally defines this protein as a knottin.</text>
</comment>
<comment type="PTM">
    <text evidence="3">Contains 3 disulfide bonds.</text>
</comment>
<comment type="PTM">
    <text evidence="2 3">This is a cyclic peptide.</text>
</comment>
<comment type="mass spectrometry" mass="3154.99" method="Electrospray" evidence="3"/>
<comment type="similarity">
    <text evidence="2">Belongs to the cyclotide family. Bracelet subfamily.</text>
</comment>
<comment type="caution">
    <text evidence="5">This peptide is cyclic. The start position was chosen by similarity to cyclotide cter-A for which the DNA sequence is known.</text>
</comment>
<dbReference type="SMR" id="P86850"/>
<dbReference type="GO" id="GO:0006952">
    <property type="term" value="P:defense response"/>
    <property type="evidence" value="ECO:0007669"/>
    <property type="project" value="UniProtKB-KW"/>
</dbReference>
<dbReference type="InterPro" id="IPR005535">
    <property type="entry name" value="Cyclotide"/>
</dbReference>
<dbReference type="InterPro" id="IPR012323">
    <property type="entry name" value="Cyclotide_bracelet_CS"/>
</dbReference>
<dbReference type="InterPro" id="IPR036146">
    <property type="entry name" value="Cyclotide_sf"/>
</dbReference>
<dbReference type="Pfam" id="PF03784">
    <property type="entry name" value="Cyclotide"/>
    <property type="match status" value="1"/>
</dbReference>
<dbReference type="PIRSF" id="PIRSF037891">
    <property type="entry name" value="Cycloviolacin"/>
    <property type="match status" value="1"/>
</dbReference>
<dbReference type="SUPFAM" id="SSF57038">
    <property type="entry name" value="Cyclotides"/>
    <property type="match status" value="1"/>
</dbReference>
<dbReference type="PROSITE" id="PS51052">
    <property type="entry name" value="CYCLOTIDE"/>
    <property type="match status" value="1"/>
</dbReference>
<dbReference type="PROSITE" id="PS60008">
    <property type="entry name" value="CYCLOTIDE_BRACELET"/>
    <property type="match status" value="1"/>
</dbReference>
<evidence type="ECO:0000250" key="1">
    <source>
        <dbReference type="UniProtKB" id="P56254"/>
    </source>
</evidence>
<evidence type="ECO:0000255" key="2">
    <source>
        <dbReference type="PROSITE-ProRule" id="PRU00395"/>
    </source>
</evidence>
<evidence type="ECO:0000269" key="3">
    <source>
    </source>
</evidence>
<evidence type="ECO:0000303" key="4">
    <source>
    </source>
</evidence>
<evidence type="ECO:0000305" key="5"/>
<feature type="peptide" id="PRO_0000405861" description="Cyclotide cter-J" evidence="2 3">
    <location>
        <begin position="1"/>
        <end position="31"/>
    </location>
</feature>
<feature type="disulfide bond" evidence="1 2">
    <location>
        <begin position="5"/>
        <end position="21"/>
    </location>
</feature>
<feature type="disulfide bond" evidence="1 2">
    <location>
        <begin position="9"/>
        <end position="23"/>
    </location>
</feature>
<feature type="disulfide bond" evidence="1 2">
    <location>
        <begin position="14"/>
        <end position="28"/>
    </location>
</feature>
<feature type="cross-link" description="Cyclopeptide (Gly-Asp)" evidence="4">
    <location>
        <begin position="1"/>
        <end position="31"/>
    </location>
</feature>
<feature type="unsure residue" description="I or L" evidence="3">
    <location>
        <position position="12"/>
    </location>
</feature>
<feature type="unsure residue" description="I or L" evidence="3">
    <location>
        <position position="15"/>
    </location>
</feature>
<feature type="unsure residue" description="I or L" evidence="3">
    <location>
        <position position="18"/>
    </location>
</feature>
<feature type="unsure residue" description="I or L" evidence="3">
    <location>
        <position position="30"/>
    </location>
</feature>
<organism>
    <name type="scientific">Clitoria ternatea</name>
    <name type="common">Butterfly pea</name>
    <dbReference type="NCBI Taxonomy" id="43366"/>
    <lineage>
        <taxon>Eukaryota</taxon>
        <taxon>Viridiplantae</taxon>
        <taxon>Streptophyta</taxon>
        <taxon>Embryophyta</taxon>
        <taxon>Tracheophyta</taxon>
        <taxon>Spermatophyta</taxon>
        <taxon>Magnoliopsida</taxon>
        <taxon>eudicotyledons</taxon>
        <taxon>Gunneridae</taxon>
        <taxon>Pentapetalae</taxon>
        <taxon>rosids</taxon>
        <taxon>fabids</taxon>
        <taxon>Fabales</taxon>
        <taxon>Fabaceae</taxon>
        <taxon>Papilionoideae</taxon>
        <taxon>50 kb inversion clade</taxon>
        <taxon>NPAAA clade</taxon>
        <taxon>indigoferoid/millettioid clade</taxon>
        <taxon>Phaseoleae</taxon>
        <taxon>Clitoria</taxon>
    </lineage>
</organism>
<protein>
    <recommendedName>
        <fullName evidence="4">Cyclotide cter-J</fullName>
    </recommendedName>
</protein>
<proteinExistence type="evidence at protein level"/>